<keyword id="KW-0052">Apoplast</keyword>
<keyword id="KW-0134">Cell wall</keyword>
<keyword id="KW-0903">Direct protein sequencing</keyword>
<keyword id="KW-1185">Reference proteome</keyword>
<keyword id="KW-0964">Secreted</keyword>
<sequence length="21" mass="2248">ADPDPLQDFXVADLXDNAVXV</sequence>
<accession>P29532</accession>
<protein>
    <recommendedName>
        <fullName>Pseudogermin</fullName>
    </recommendedName>
</protein>
<comment type="function">
    <text>May subsume the role of germin at the low water potentials during embryogenesis.</text>
</comment>
<comment type="subunit">
    <text>Homotetramer.</text>
</comment>
<comment type="subcellular location">
    <subcellularLocation>
        <location>Secreted</location>
        <location>Extracellular space</location>
        <location>Apoplast</location>
    </subcellularLocation>
    <subcellularLocation>
        <location>Secreted</location>
        <location>Cell wall</location>
    </subcellularLocation>
    <text>Component of the walls of the mature, ungerminated embryos.</text>
</comment>
<comment type="developmental stage">
    <text>Accumulates maximally between 20-25-days postanthesis, then declines appreciably in amount by 30-days postanthesis, in soluble extracts of immature embryos.</text>
</comment>
<comment type="similarity">
    <text evidence="1">Belongs to the germin family.</text>
</comment>
<organism>
    <name type="scientific">Triticum aestivum</name>
    <name type="common">Wheat</name>
    <dbReference type="NCBI Taxonomy" id="4565"/>
    <lineage>
        <taxon>Eukaryota</taxon>
        <taxon>Viridiplantae</taxon>
        <taxon>Streptophyta</taxon>
        <taxon>Embryophyta</taxon>
        <taxon>Tracheophyta</taxon>
        <taxon>Spermatophyta</taxon>
        <taxon>Magnoliopsida</taxon>
        <taxon>Liliopsida</taxon>
        <taxon>Poales</taxon>
        <taxon>Poaceae</taxon>
        <taxon>BOP clade</taxon>
        <taxon>Pooideae</taxon>
        <taxon>Triticodae</taxon>
        <taxon>Triticeae</taxon>
        <taxon>Triticinae</taxon>
        <taxon>Triticum</taxon>
    </lineage>
</organism>
<dbReference type="PIR" id="S27247">
    <property type="entry name" value="S27247"/>
</dbReference>
<dbReference type="Proteomes" id="UP000019116">
    <property type="component" value="Unplaced"/>
</dbReference>
<dbReference type="GO" id="GO:0048046">
    <property type="term" value="C:apoplast"/>
    <property type="evidence" value="ECO:0007669"/>
    <property type="project" value="UniProtKB-SubCell"/>
</dbReference>
<name>GERP_WHEAT</name>
<proteinExistence type="evidence at protein level"/>
<reference key="1">
    <citation type="journal article" date="1992" name="Eur. J. Biochem.">
        <title>Germin isoforms are discrete temporal markers of wheat development. Pseudogermin is a uniquely thermostable water-soluble oligomeric protein in ungerminated embryos and like germin in germinated embryos, it is incorporated into cell walls.</title>
        <authorList>
            <person name="Lane B.G."/>
            <person name="Cuming A.C."/>
            <person name="Fregeau J."/>
            <person name="Carpita N.C."/>
            <person name="Hurkman W.J."/>
            <person name="Bernier F."/>
            <person name="Dratewka-Kos E."/>
            <person name="Kennedy T.D."/>
        </authorList>
    </citation>
    <scope>PROTEIN SEQUENCE</scope>
</reference>
<feature type="chain" id="PRO_0000192014" description="Pseudogermin">
    <location>
        <begin position="1"/>
        <end position="21" status="greater than"/>
    </location>
</feature>
<feature type="non-terminal residue">
    <location>
        <position position="21"/>
    </location>
</feature>
<evidence type="ECO:0000305" key="1"/>